<reference key="1">
    <citation type="journal article" date="2004" name="Proc. Natl. Acad. Sci. U.S.A.">
        <title>Genome sequence of the enterobacterial phytopathogen Erwinia carotovora subsp. atroseptica and characterization of virulence factors.</title>
        <authorList>
            <person name="Bell K.S."/>
            <person name="Sebaihia M."/>
            <person name="Pritchard L."/>
            <person name="Holden M.T.G."/>
            <person name="Hyman L.J."/>
            <person name="Holeva M.C."/>
            <person name="Thomson N.R."/>
            <person name="Bentley S.D."/>
            <person name="Churcher L.J.C."/>
            <person name="Mungall K."/>
            <person name="Atkin R."/>
            <person name="Bason N."/>
            <person name="Brooks K."/>
            <person name="Chillingworth T."/>
            <person name="Clark K."/>
            <person name="Doggett J."/>
            <person name="Fraser A."/>
            <person name="Hance Z."/>
            <person name="Hauser H."/>
            <person name="Jagels K."/>
            <person name="Moule S."/>
            <person name="Norbertczak H."/>
            <person name="Ormond D."/>
            <person name="Price C."/>
            <person name="Quail M.A."/>
            <person name="Sanders M."/>
            <person name="Walker D."/>
            <person name="Whitehead S."/>
            <person name="Salmond G.P.C."/>
            <person name="Birch P.R.J."/>
            <person name="Parkhill J."/>
            <person name="Toth I.K."/>
        </authorList>
    </citation>
    <scope>NUCLEOTIDE SEQUENCE [LARGE SCALE GENOMIC DNA]</scope>
    <source>
        <strain>SCRI 1043 / ATCC BAA-672</strain>
    </source>
</reference>
<sequence length="332" mass="36134">MQQVVYVASPESQQIHVWQLGAQGNLTLLQTVEVPGQVQPMAIAPNKRHLYVGVRPDFRVLSYRIDEQGKLTEAGVASLPGSPTHLSTDNDGRFLFSASYSGACVSVSPIDADGIVGEPIQQLDGLEGCHSTNIDPTNTVVWAPCLKEDRIRLYDLGSVGELSIHRQAEMTTVSGAGPRHMAFHPNQRFAYCVNELDSSVDVYQLDAASGDVQKVQTLDAMPAGFSDTRWAADIHITPNGNFLYISDRTASLLSVFQISEDGSTLTLTGHQPTETQPRGFNIDHTGEFLISAGQKSQHIEVYHIDQHTGDLQPLARYAVGQGPMWVAVLALD</sequence>
<organism>
    <name type="scientific">Pectobacterium atrosepticum (strain SCRI 1043 / ATCC BAA-672)</name>
    <name type="common">Erwinia carotovora subsp. atroseptica</name>
    <dbReference type="NCBI Taxonomy" id="218491"/>
    <lineage>
        <taxon>Bacteria</taxon>
        <taxon>Pseudomonadati</taxon>
        <taxon>Pseudomonadota</taxon>
        <taxon>Gammaproteobacteria</taxon>
        <taxon>Enterobacterales</taxon>
        <taxon>Pectobacteriaceae</taxon>
        <taxon>Pectobacterium</taxon>
    </lineage>
</organism>
<name>6PGL_PECAS</name>
<dbReference type="EC" id="3.1.1.31" evidence="1"/>
<dbReference type="EMBL" id="BX950851">
    <property type="protein sequence ID" value="CAG74313.1"/>
    <property type="molecule type" value="Genomic_DNA"/>
</dbReference>
<dbReference type="RefSeq" id="WP_011092988.1">
    <property type="nucleotide sequence ID" value="NC_004547.2"/>
</dbReference>
<dbReference type="SMR" id="Q6D7C2"/>
<dbReference type="STRING" id="218491.ECA1403"/>
<dbReference type="KEGG" id="eca:ECA1403"/>
<dbReference type="PATRIC" id="fig|218491.5.peg.1439"/>
<dbReference type="eggNOG" id="COG2706">
    <property type="taxonomic scope" value="Bacteria"/>
</dbReference>
<dbReference type="HOGENOM" id="CLU_038716_2_0_6"/>
<dbReference type="OrthoDB" id="9790815at2"/>
<dbReference type="UniPathway" id="UPA00115">
    <property type="reaction ID" value="UER00409"/>
</dbReference>
<dbReference type="Proteomes" id="UP000007966">
    <property type="component" value="Chromosome"/>
</dbReference>
<dbReference type="GO" id="GO:0005829">
    <property type="term" value="C:cytosol"/>
    <property type="evidence" value="ECO:0007669"/>
    <property type="project" value="TreeGrafter"/>
</dbReference>
<dbReference type="GO" id="GO:0017057">
    <property type="term" value="F:6-phosphogluconolactonase activity"/>
    <property type="evidence" value="ECO:0007669"/>
    <property type="project" value="UniProtKB-UniRule"/>
</dbReference>
<dbReference type="GO" id="GO:0006006">
    <property type="term" value="P:glucose metabolic process"/>
    <property type="evidence" value="ECO:0007669"/>
    <property type="project" value="UniProtKB-KW"/>
</dbReference>
<dbReference type="GO" id="GO:0009051">
    <property type="term" value="P:pentose-phosphate shunt, oxidative branch"/>
    <property type="evidence" value="ECO:0007669"/>
    <property type="project" value="UniProtKB-UniRule"/>
</dbReference>
<dbReference type="Gene3D" id="2.130.10.10">
    <property type="entry name" value="YVTN repeat-like/Quinoprotein amine dehydrogenase"/>
    <property type="match status" value="1"/>
</dbReference>
<dbReference type="HAMAP" id="MF_01605">
    <property type="entry name" value="6P_gluconolactonase"/>
    <property type="match status" value="1"/>
</dbReference>
<dbReference type="InterPro" id="IPR022528">
    <property type="entry name" value="6-phosphogluconolactonase_YbhE"/>
</dbReference>
<dbReference type="InterPro" id="IPR050282">
    <property type="entry name" value="Cycloisomerase_2"/>
</dbReference>
<dbReference type="InterPro" id="IPR019405">
    <property type="entry name" value="Lactonase_7-beta_prop"/>
</dbReference>
<dbReference type="InterPro" id="IPR011045">
    <property type="entry name" value="N2O_reductase_N"/>
</dbReference>
<dbReference type="InterPro" id="IPR015943">
    <property type="entry name" value="WD40/YVTN_repeat-like_dom_sf"/>
</dbReference>
<dbReference type="NCBIfam" id="NF008258">
    <property type="entry name" value="PRK11028.1"/>
    <property type="match status" value="1"/>
</dbReference>
<dbReference type="PANTHER" id="PTHR30344:SF1">
    <property type="entry name" value="6-PHOSPHOGLUCONOLACTONASE"/>
    <property type="match status" value="1"/>
</dbReference>
<dbReference type="PANTHER" id="PTHR30344">
    <property type="entry name" value="6-PHOSPHOGLUCONOLACTONASE-RELATED"/>
    <property type="match status" value="1"/>
</dbReference>
<dbReference type="Pfam" id="PF10282">
    <property type="entry name" value="Lactonase"/>
    <property type="match status" value="1"/>
</dbReference>
<dbReference type="SUPFAM" id="SSF50974">
    <property type="entry name" value="Nitrous oxide reductase, N-terminal domain"/>
    <property type="match status" value="1"/>
</dbReference>
<evidence type="ECO:0000255" key="1">
    <source>
        <dbReference type="HAMAP-Rule" id="MF_01605"/>
    </source>
</evidence>
<accession>Q6D7C2</accession>
<comment type="function">
    <text evidence="1">Catalyzes the hydrolysis of 6-phosphogluconolactone to 6-phosphogluconate.</text>
</comment>
<comment type="catalytic activity">
    <reaction evidence="1">
        <text>6-phospho-D-glucono-1,5-lactone + H2O = 6-phospho-D-gluconate + H(+)</text>
        <dbReference type="Rhea" id="RHEA:12556"/>
        <dbReference type="ChEBI" id="CHEBI:15377"/>
        <dbReference type="ChEBI" id="CHEBI:15378"/>
        <dbReference type="ChEBI" id="CHEBI:57955"/>
        <dbReference type="ChEBI" id="CHEBI:58759"/>
        <dbReference type="EC" id="3.1.1.31"/>
    </reaction>
</comment>
<comment type="pathway">
    <text evidence="1">Carbohydrate degradation; pentose phosphate pathway; D-ribulose 5-phosphate from D-glucose 6-phosphate (oxidative stage): step 2/3.</text>
</comment>
<comment type="similarity">
    <text evidence="1">Belongs to the cycloisomerase 2 family.</text>
</comment>
<gene>
    <name evidence="1" type="primary">pgl</name>
    <name type="ordered locus">ECA1403</name>
</gene>
<feature type="chain" id="PRO_0000171135" description="6-phosphogluconolactonase">
    <location>
        <begin position="1"/>
        <end position="332"/>
    </location>
</feature>
<protein>
    <recommendedName>
        <fullName evidence="1">6-phosphogluconolactonase</fullName>
        <shortName evidence="1">6-P-gluconolactonase</shortName>
        <ecNumber evidence="1">3.1.1.31</ecNumber>
    </recommendedName>
</protein>
<keyword id="KW-0119">Carbohydrate metabolism</keyword>
<keyword id="KW-0313">Glucose metabolism</keyword>
<keyword id="KW-0378">Hydrolase</keyword>
<keyword id="KW-1185">Reference proteome</keyword>
<proteinExistence type="inferred from homology"/>